<sequence length="946" mass="106281">MDVNQIRKTFIDFFREKCEHTFVPSSAVIPHDDPTLLFANAGMNQFKPIFLGQVNPKSEQAKLKRAVNSQKCIRAGGKHNDLDDVGKDTYHHTFFEMLGNWSFGNYFKKEAITWAWELLTEVYKLDKERLYVTYFRGDPEKGLEADLEAKNLWLQYLPEERVLPFGMKENFWEMGDQGPCGPCSEIHYDKVEGRDGASFVNADDPTLIEIWNLVFIQYNREADKSLRPLPQKHVDTGMGLERLTSIIQKVPTNYDTDVFMPIFAAIQEVTGYPEPYGGKVGAEDTQQVDMAYRVIADHIRTLTFSIADGAAPSVDGRGQVLRRILRRAVRYGKQKLNAPAGFFSKLVDVVIANFGEFFPELRKKPEHIKMVLTREEDMFNKTLEKGIVEFEKMIKKSVNNTLSAENAYFLSTCYGFPIDLTTIMAEEKNYKVDIKGYEGLCEAQSEIDRKRQKEKKVELTLGAEANAWLKNNDIKPTDDSFKYKQHEIQSVIKAIWNGKEFVDTAPKGTLIGVVLENSNFYAEQGGQIYDIGQLSFIDDQKTAFDVKDCKVFGGYVLHIGYLSYECDSLKVGDRVELTVDYTRRSPIMSNHTSTHMVNYALKNILGDGIDQRGSFVDAQRFRFDFSFGRAITKDELIKIDQIVNDQIFKQLDVHAKEVGLASAKKINGLRAVFGEVYPDPVRVVSVGVPVEQLIENPTNPEWANYSIEFCGGTHLSNTKQAELFTITSEETLGAGVRRIVAVTGSEAASAIELNKELEVRFNNALKLSGSELAKEIVSLLDLLKVVTISASVRMNLVETLKEVQALQRKQVKEQETILAQQAQTYLEKTSEELAKSQPKVFVDLVNFNSNTPLITETIKKIQTKSPMTAIMLISPDEEKGKVTCIGIVPKDSEISKTLTANAWVVKVTEVLGGKGGGKVDVAQGVGSKLDKIDEAILVSREFANAN</sequence>
<keyword id="KW-0030">Aminoacyl-tRNA synthetase</keyword>
<keyword id="KW-0067">ATP-binding</keyword>
<keyword id="KW-0963">Cytoplasm</keyword>
<keyword id="KW-0436">Ligase</keyword>
<keyword id="KW-0479">Metal-binding</keyword>
<keyword id="KW-0547">Nucleotide-binding</keyword>
<keyword id="KW-0648">Protein biosynthesis</keyword>
<keyword id="KW-1185">Reference proteome</keyword>
<keyword id="KW-0694">RNA-binding</keyword>
<keyword id="KW-0820">tRNA-binding</keyword>
<keyword id="KW-0862">Zinc</keyword>
<evidence type="ECO:0000255" key="1">
    <source>
        <dbReference type="HAMAP-Rule" id="MF_03133"/>
    </source>
</evidence>
<evidence type="ECO:0000305" key="2"/>
<proteinExistence type="evidence at transcript level"/>
<name>SYAC_DICDI</name>
<accession>Q54Y20</accession>
<accession>Q9U6B5</accession>
<organism>
    <name type="scientific">Dictyostelium discoideum</name>
    <name type="common">Social amoeba</name>
    <dbReference type="NCBI Taxonomy" id="44689"/>
    <lineage>
        <taxon>Eukaryota</taxon>
        <taxon>Amoebozoa</taxon>
        <taxon>Evosea</taxon>
        <taxon>Eumycetozoa</taxon>
        <taxon>Dictyostelia</taxon>
        <taxon>Dictyosteliales</taxon>
        <taxon>Dictyosteliaceae</taxon>
        <taxon>Dictyostelium</taxon>
    </lineage>
</organism>
<feature type="chain" id="PRO_0000315603" description="Alanine--tRNA ligase, cytoplasmic">
    <location>
        <begin position="1"/>
        <end position="946"/>
    </location>
</feature>
<feature type="binding site" evidence="1">
    <location>
        <position position="591"/>
    </location>
    <ligand>
        <name>Zn(2+)</name>
        <dbReference type="ChEBI" id="CHEBI:29105"/>
    </ligand>
</feature>
<feature type="binding site" evidence="1">
    <location>
        <position position="595"/>
    </location>
    <ligand>
        <name>Zn(2+)</name>
        <dbReference type="ChEBI" id="CHEBI:29105"/>
    </ligand>
</feature>
<feature type="binding site" evidence="1">
    <location>
        <position position="710"/>
    </location>
    <ligand>
        <name>Zn(2+)</name>
        <dbReference type="ChEBI" id="CHEBI:29105"/>
    </ligand>
</feature>
<feature type="binding site" evidence="1">
    <location>
        <position position="714"/>
    </location>
    <ligand>
        <name>Zn(2+)</name>
        <dbReference type="ChEBI" id="CHEBI:29105"/>
    </ligand>
</feature>
<feature type="sequence conflict" description="In Ref. 1; AAF05592." evidence="2" ref="1">
    <original>C</original>
    <variation>Y</variation>
    <location>
        <position position="18"/>
    </location>
</feature>
<feature type="sequence conflict" description="In Ref. 1; AAF05592." evidence="2" ref="1">
    <original>A</original>
    <variation>T</variation>
    <location>
        <position position="340"/>
    </location>
</feature>
<gene>
    <name type="primary">alaS</name>
    <name type="ORF">DDB_G0277823</name>
</gene>
<reference key="1">
    <citation type="journal article" date="2000" name="Proc. Natl. Acad. Sci. U.S.A.">
        <title>Origin of mitochondria in relation to evolutionary history of eukaryotic alanyl-tRNA synthetase.</title>
        <authorList>
            <person name="Chihade J.W."/>
            <person name="Brown J.R."/>
            <person name="Schimmel P.R."/>
            <person name="Ribas De Pouplana L."/>
        </authorList>
    </citation>
    <scope>NUCLEOTIDE SEQUENCE [MRNA]</scope>
</reference>
<reference key="2">
    <citation type="journal article" date="2005" name="Nature">
        <title>The genome of the social amoeba Dictyostelium discoideum.</title>
        <authorList>
            <person name="Eichinger L."/>
            <person name="Pachebat J.A."/>
            <person name="Gloeckner G."/>
            <person name="Rajandream M.A."/>
            <person name="Sucgang R."/>
            <person name="Berriman M."/>
            <person name="Song J."/>
            <person name="Olsen R."/>
            <person name="Szafranski K."/>
            <person name="Xu Q."/>
            <person name="Tunggal B."/>
            <person name="Kummerfeld S."/>
            <person name="Madera M."/>
            <person name="Konfortov B.A."/>
            <person name="Rivero F."/>
            <person name="Bankier A.T."/>
            <person name="Lehmann R."/>
            <person name="Hamlin N."/>
            <person name="Davies R."/>
            <person name="Gaudet P."/>
            <person name="Fey P."/>
            <person name="Pilcher K."/>
            <person name="Chen G."/>
            <person name="Saunders D."/>
            <person name="Sodergren E.J."/>
            <person name="Davis P."/>
            <person name="Kerhornou A."/>
            <person name="Nie X."/>
            <person name="Hall N."/>
            <person name="Anjard C."/>
            <person name="Hemphill L."/>
            <person name="Bason N."/>
            <person name="Farbrother P."/>
            <person name="Desany B."/>
            <person name="Just E."/>
            <person name="Morio T."/>
            <person name="Rost R."/>
            <person name="Churcher C.M."/>
            <person name="Cooper J."/>
            <person name="Haydock S."/>
            <person name="van Driessche N."/>
            <person name="Cronin A."/>
            <person name="Goodhead I."/>
            <person name="Muzny D.M."/>
            <person name="Mourier T."/>
            <person name="Pain A."/>
            <person name="Lu M."/>
            <person name="Harper D."/>
            <person name="Lindsay R."/>
            <person name="Hauser H."/>
            <person name="James K.D."/>
            <person name="Quiles M."/>
            <person name="Madan Babu M."/>
            <person name="Saito T."/>
            <person name="Buchrieser C."/>
            <person name="Wardroper A."/>
            <person name="Felder M."/>
            <person name="Thangavelu M."/>
            <person name="Johnson D."/>
            <person name="Knights A."/>
            <person name="Loulseged H."/>
            <person name="Mungall K.L."/>
            <person name="Oliver K."/>
            <person name="Price C."/>
            <person name="Quail M.A."/>
            <person name="Urushihara H."/>
            <person name="Hernandez J."/>
            <person name="Rabbinowitsch E."/>
            <person name="Steffen D."/>
            <person name="Sanders M."/>
            <person name="Ma J."/>
            <person name="Kohara Y."/>
            <person name="Sharp S."/>
            <person name="Simmonds M.N."/>
            <person name="Spiegler S."/>
            <person name="Tivey A."/>
            <person name="Sugano S."/>
            <person name="White B."/>
            <person name="Walker D."/>
            <person name="Woodward J.R."/>
            <person name="Winckler T."/>
            <person name="Tanaka Y."/>
            <person name="Shaulsky G."/>
            <person name="Schleicher M."/>
            <person name="Weinstock G.M."/>
            <person name="Rosenthal A."/>
            <person name="Cox E.C."/>
            <person name="Chisholm R.L."/>
            <person name="Gibbs R.A."/>
            <person name="Loomis W.F."/>
            <person name="Platzer M."/>
            <person name="Kay R.R."/>
            <person name="Williams J.G."/>
            <person name="Dear P.H."/>
            <person name="Noegel A.A."/>
            <person name="Barrell B.G."/>
            <person name="Kuspa A."/>
        </authorList>
    </citation>
    <scope>NUCLEOTIDE SEQUENCE [LARGE SCALE GENOMIC DNA]</scope>
    <source>
        <strain>AX4</strain>
    </source>
</reference>
<comment type="function">
    <text evidence="1">Catalyzes the attachment of alanine to tRNA(Ala) in a two-step reaction: alanine is first activated by ATP to form Ala-AMP and then transferred to the acceptor end of tRNA(Ala). Also edits incorrectly charged tRNA(Ala) via its editing domain.</text>
</comment>
<comment type="catalytic activity">
    <reaction evidence="1">
        <text>tRNA(Ala) + L-alanine + ATP = L-alanyl-tRNA(Ala) + AMP + diphosphate</text>
        <dbReference type="Rhea" id="RHEA:12540"/>
        <dbReference type="Rhea" id="RHEA-COMP:9657"/>
        <dbReference type="Rhea" id="RHEA-COMP:9923"/>
        <dbReference type="ChEBI" id="CHEBI:30616"/>
        <dbReference type="ChEBI" id="CHEBI:33019"/>
        <dbReference type="ChEBI" id="CHEBI:57972"/>
        <dbReference type="ChEBI" id="CHEBI:78442"/>
        <dbReference type="ChEBI" id="CHEBI:78497"/>
        <dbReference type="ChEBI" id="CHEBI:456215"/>
        <dbReference type="EC" id="6.1.1.7"/>
    </reaction>
</comment>
<comment type="cofactor">
    <cofactor evidence="1">
        <name>Zn(2+)</name>
        <dbReference type="ChEBI" id="CHEBI:29105"/>
    </cofactor>
    <text evidence="1">Binds 1 zinc ion per subunit.</text>
</comment>
<comment type="subunit">
    <text evidence="1">Monomer.</text>
</comment>
<comment type="subcellular location">
    <subcellularLocation>
        <location evidence="1">Cytoplasm</location>
    </subcellularLocation>
</comment>
<comment type="domain">
    <text evidence="1">Consists of three domains; the N-terminal catalytic domain, the editing domain and the C-terminal C-Ala domain. The editing domain removes incorrectly charged amino acids, while the C-Ala domain, along with tRNA(Ala), serves as a bridge to cooperatively bring together the editing and aminoacylation centers thus stimulating deacylation of misacylated tRNAs.</text>
</comment>
<comment type="similarity">
    <text evidence="1">Belongs to the class-II aminoacyl-tRNA synthetase family.</text>
</comment>
<dbReference type="EC" id="6.1.1.7" evidence="1"/>
<dbReference type="EMBL" id="AF188717">
    <property type="protein sequence ID" value="AAF05592.1"/>
    <property type="molecule type" value="mRNA"/>
</dbReference>
<dbReference type="EMBL" id="AAFI02000023">
    <property type="protein sequence ID" value="EAL68084.1"/>
    <property type="molecule type" value="Genomic_DNA"/>
</dbReference>
<dbReference type="RefSeq" id="XP_642382.1">
    <property type="nucleotide sequence ID" value="XM_637290.1"/>
</dbReference>
<dbReference type="SMR" id="Q54Y20"/>
<dbReference type="FunCoup" id="Q54Y20">
    <property type="interactions" value="1095"/>
</dbReference>
<dbReference type="STRING" id="44689.Q54Y20"/>
<dbReference type="PaxDb" id="44689-DDB0214894"/>
<dbReference type="EnsemblProtists" id="EAL68084">
    <property type="protein sequence ID" value="EAL68084"/>
    <property type="gene ID" value="DDB_G0277823"/>
</dbReference>
<dbReference type="GeneID" id="8621587"/>
<dbReference type="KEGG" id="ddi:DDB_G0277823"/>
<dbReference type="dictyBase" id="DDB_G0277823">
    <property type="gene designation" value="alaS"/>
</dbReference>
<dbReference type="VEuPathDB" id="AmoebaDB:DDB_G0277823"/>
<dbReference type="eggNOG" id="KOG0188">
    <property type="taxonomic scope" value="Eukaryota"/>
</dbReference>
<dbReference type="HOGENOM" id="CLU_004485_5_0_1"/>
<dbReference type="InParanoid" id="Q54Y20"/>
<dbReference type="OMA" id="NKKDNFW"/>
<dbReference type="PhylomeDB" id="Q54Y20"/>
<dbReference type="BRENDA" id="6.1.1.7">
    <property type="organism ID" value="1939"/>
</dbReference>
<dbReference type="PRO" id="PR:Q54Y20"/>
<dbReference type="Proteomes" id="UP000002195">
    <property type="component" value="Chromosome 3"/>
</dbReference>
<dbReference type="GO" id="GO:0005737">
    <property type="term" value="C:cytoplasm"/>
    <property type="evidence" value="ECO:0000250"/>
    <property type="project" value="dictyBase"/>
</dbReference>
<dbReference type="GO" id="GO:0005739">
    <property type="term" value="C:mitochondrion"/>
    <property type="evidence" value="ECO:0000318"/>
    <property type="project" value="GO_Central"/>
</dbReference>
<dbReference type="GO" id="GO:0004813">
    <property type="term" value="F:alanine-tRNA ligase activity"/>
    <property type="evidence" value="ECO:0000250"/>
    <property type="project" value="dictyBase"/>
</dbReference>
<dbReference type="GO" id="GO:0002161">
    <property type="term" value="F:aminoacyl-tRNA deacylase activity"/>
    <property type="evidence" value="ECO:0000318"/>
    <property type="project" value="GO_Central"/>
</dbReference>
<dbReference type="GO" id="GO:0005524">
    <property type="term" value="F:ATP binding"/>
    <property type="evidence" value="ECO:0007669"/>
    <property type="project" value="UniProtKB-UniRule"/>
</dbReference>
<dbReference type="GO" id="GO:0000049">
    <property type="term" value="F:tRNA binding"/>
    <property type="evidence" value="ECO:0007669"/>
    <property type="project" value="UniProtKB-KW"/>
</dbReference>
<dbReference type="GO" id="GO:0008270">
    <property type="term" value="F:zinc ion binding"/>
    <property type="evidence" value="ECO:0007669"/>
    <property type="project" value="UniProtKB-UniRule"/>
</dbReference>
<dbReference type="GO" id="GO:0006419">
    <property type="term" value="P:alanyl-tRNA aminoacylation"/>
    <property type="evidence" value="ECO:0000250"/>
    <property type="project" value="dictyBase"/>
</dbReference>
<dbReference type="CDD" id="cd00673">
    <property type="entry name" value="AlaRS_core"/>
    <property type="match status" value="1"/>
</dbReference>
<dbReference type="FunFam" id="2.40.30.130:FF:000015">
    <property type="entry name" value="Alanine--tRNA ligase"/>
    <property type="match status" value="1"/>
</dbReference>
<dbReference type="FunFam" id="3.30.930.10:FF:000011">
    <property type="entry name" value="Alanine--tRNA ligase, cytoplasmic"/>
    <property type="match status" value="1"/>
</dbReference>
<dbReference type="FunFam" id="3.30.980.10:FF:000004">
    <property type="entry name" value="Alanine--tRNA ligase, cytoplasmic"/>
    <property type="match status" value="1"/>
</dbReference>
<dbReference type="FunFam" id="3.10.310.40:FF:000002">
    <property type="entry name" value="alanine--tRNA ligase, cytoplasmic"/>
    <property type="match status" value="1"/>
</dbReference>
<dbReference type="Gene3D" id="2.40.30.130">
    <property type="match status" value="1"/>
</dbReference>
<dbReference type="Gene3D" id="3.10.310.40">
    <property type="match status" value="1"/>
</dbReference>
<dbReference type="Gene3D" id="3.30.930.10">
    <property type="entry name" value="Bira Bifunctional Protein, Domain 2"/>
    <property type="match status" value="1"/>
</dbReference>
<dbReference type="Gene3D" id="3.30.980.10">
    <property type="entry name" value="Threonyl-trna Synthetase, Chain A, domain 2"/>
    <property type="match status" value="1"/>
</dbReference>
<dbReference type="HAMAP" id="MF_00036_B">
    <property type="entry name" value="Ala_tRNA_synth_B"/>
    <property type="match status" value="1"/>
</dbReference>
<dbReference type="InterPro" id="IPR045864">
    <property type="entry name" value="aa-tRNA-synth_II/BPL/LPL"/>
</dbReference>
<dbReference type="InterPro" id="IPR002318">
    <property type="entry name" value="Ala-tRNA-lgiase_IIc"/>
</dbReference>
<dbReference type="InterPro" id="IPR018162">
    <property type="entry name" value="Ala-tRNA-ligase_IIc_anticod-bd"/>
</dbReference>
<dbReference type="InterPro" id="IPR018165">
    <property type="entry name" value="Ala-tRNA-synth_IIc_core"/>
</dbReference>
<dbReference type="InterPro" id="IPR018164">
    <property type="entry name" value="Ala-tRNA-synth_IIc_N"/>
</dbReference>
<dbReference type="InterPro" id="IPR050058">
    <property type="entry name" value="Ala-tRNA_ligase"/>
</dbReference>
<dbReference type="InterPro" id="IPR023033">
    <property type="entry name" value="Ala_tRNA_ligase_euk/bac"/>
</dbReference>
<dbReference type="InterPro" id="IPR003156">
    <property type="entry name" value="DHHA1_dom"/>
</dbReference>
<dbReference type="InterPro" id="IPR018163">
    <property type="entry name" value="Thr/Ala-tRNA-synth_IIc_edit"/>
</dbReference>
<dbReference type="InterPro" id="IPR009000">
    <property type="entry name" value="Transl_B-barrel_sf"/>
</dbReference>
<dbReference type="InterPro" id="IPR012947">
    <property type="entry name" value="tRNA_SAD"/>
</dbReference>
<dbReference type="NCBIfam" id="TIGR00344">
    <property type="entry name" value="alaS"/>
    <property type="match status" value="1"/>
</dbReference>
<dbReference type="PANTHER" id="PTHR11777:SF38">
    <property type="entry name" value="ALANINE--TRNA LIGASE, CYTOPLASMIC"/>
    <property type="match status" value="1"/>
</dbReference>
<dbReference type="PANTHER" id="PTHR11777">
    <property type="entry name" value="ALANYL-TRNA SYNTHETASE"/>
    <property type="match status" value="1"/>
</dbReference>
<dbReference type="Pfam" id="PF02272">
    <property type="entry name" value="DHHA1"/>
    <property type="match status" value="1"/>
</dbReference>
<dbReference type="Pfam" id="PF01411">
    <property type="entry name" value="tRNA-synt_2c"/>
    <property type="match status" value="1"/>
</dbReference>
<dbReference type="Pfam" id="PF07973">
    <property type="entry name" value="tRNA_SAD"/>
    <property type="match status" value="1"/>
</dbReference>
<dbReference type="PRINTS" id="PR00980">
    <property type="entry name" value="TRNASYNTHALA"/>
</dbReference>
<dbReference type="SMART" id="SM00863">
    <property type="entry name" value="tRNA_SAD"/>
    <property type="match status" value="1"/>
</dbReference>
<dbReference type="SUPFAM" id="SSF55681">
    <property type="entry name" value="Class II aaRS and biotin synthetases"/>
    <property type="match status" value="1"/>
</dbReference>
<dbReference type="SUPFAM" id="SSF101353">
    <property type="entry name" value="Putative anticodon-binding domain of alanyl-tRNA synthetase (AlaRS)"/>
    <property type="match status" value="1"/>
</dbReference>
<dbReference type="SUPFAM" id="SSF55186">
    <property type="entry name" value="ThrRS/AlaRS common domain"/>
    <property type="match status" value="1"/>
</dbReference>
<dbReference type="SUPFAM" id="SSF50447">
    <property type="entry name" value="Translation proteins"/>
    <property type="match status" value="1"/>
</dbReference>
<dbReference type="PROSITE" id="PS50860">
    <property type="entry name" value="AA_TRNA_LIGASE_II_ALA"/>
    <property type="match status" value="1"/>
</dbReference>
<protein>
    <recommendedName>
        <fullName evidence="1">Alanine--tRNA ligase, cytoplasmic</fullName>
        <ecNumber evidence="1">6.1.1.7</ecNumber>
    </recommendedName>
    <alternativeName>
        <fullName evidence="1">Alanyl-tRNA synthetase</fullName>
        <shortName evidence="1">AlaRS</shortName>
    </alternativeName>
</protein>